<dbReference type="EMBL" id="CP001056">
    <property type="protein sequence ID" value="ACD23525.1"/>
    <property type="molecule type" value="Genomic_DNA"/>
</dbReference>
<dbReference type="SMR" id="B2TJZ9"/>
<dbReference type="KEGG" id="cbk:CLL_A0497"/>
<dbReference type="PATRIC" id="fig|935198.13.peg.452"/>
<dbReference type="HOGENOM" id="CLU_050669_0_1_9"/>
<dbReference type="Proteomes" id="UP000001195">
    <property type="component" value="Chromosome"/>
</dbReference>
<dbReference type="GO" id="GO:0005886">
    <property type="term" value="C:plasma membrane"/>
    <property type="evidence" value="ECO:0007669"/>
    <property type="project" value="UniProtKB-SubCell"/>
</dbReference>
<dbReference type="GO" id="GO:0045259">
    <property type="term" value="C:proton-transporting ATP synthase complex"/>
    <property type="evidence" value="ECO:0007669"/>
    <property type="project" value="UniProtKB-KW"/>
</dbReference>
<dbReference type="GO" id="GO:0005524">
    <property type="term" value="F:ATP binding"/>
    <property type="evidence" value="ECO:0007669"/>
    <property type="project" value="UniProtKB-UniRule"/>
</dbReference>
<dbReference type="GO" id="GO:0046933">
    <property type="term" value="F:proton-transporting ATP synthase activity, rotational mechanism"/>
    <property type="evidence" value="ECO:0007669"/>
    <property type="project" value="UniProtKB-UniRule"/>
</dbReference>
<dbReference type="GO" id="GO:0042777">
    <property type="term" value="P:proton motive force-driven plasma membrane ATP synthesis"/>
    <property type="evidence" value="ECO:0007669"/>
    <property type="project" value="UniProtKB-UniRule"/>
</dbReference>
<dbReference type="CDD" id="cd12151">
    <property type="entry name" value="F1-ATPase_gamma"/>
    <property type="match status" value="1"/>
</dbReference>
<dbReference type="Gene3D" id="3.40.1380.10">
    <property type="match status" value="1"/>
</dbReference>
<dbReference type="Gene3D" id="1.10.287.80">
    <property type="entry name" value="ATP synthase, gamma subunit, helix hairpin domain"/>
    <property type="match status" value="1"/>
</dbReference>
<dbReference type="HAMAP" id="MF_00815">
    <property type="entry name" value="ATP_synth_gamma_bact"/>
    <property type="match status" value="1"/>
</dbReference>
<dbReference type="InterPro" id="IPR035968">
    <property type="entry name" value="ATP_synth_F1_ATPase_gsu"/>
</dbReference>
<dbReference type="InterPro" id="IPR000131">
    <property type="entry name" value="ATP_synth_F1_gsu"/>
</dbReference>
<dbReference type="InterPro" id="IPR023632">
    <property type="entry name" value="ATP_synth_F1_gsu_CS"/>
</dbReference>
<dbReference type="NCBIfam" id="TIGR01146">
    <property type="entry name" value="ATPsyn_F1gamma"/>
    <property type="match status" value="1"/>
</dbReference>
<dbReference type="PANTHER" id="PTHR11693">
    <property type="entry name" value="ATP SYNTHASE GAMMA CHAIN"/>
    <property type="match status" value="1"/>
</dbReference>
<dbReference type="PANTHER" id="PTHR11693:SF22">
    <property type="entry name" value="ATP SYNTHASE SUBUNIT GAMMA, MITOCHONDRIAL"/>
    <property type="match status" value="1"/>
</dbReference>
<dbReference type="Pfam" id="PF00231">
    <property type="entry name" value="ATP-synt"/>
    <property type="match status" value="1"/>
</dbReference>
<dbReference type="PRINTS" id="PR00126">
    <property type="entry name" value="ATPASEGAMMA"/>
</dbReference>
<dbReference type="SUPFAM" id="SSF52943">
    <property type="entry name" value="ATP synthase (F1-ATPase), gamma subunit"/>
    <property type="match status" value="1"/>
</dbReference>
<dbReference type="PROSITE" id="PS00153">
    <property type="entry name" value="ATPASE_GAMMA"/>
    <property type="match status" value="1"/>
</dbReference>
<comment type="function">
    <text evidence="1">Produces ATP from ADP in the presence of a proton gradient across the membrane. The gamma chain is believed to be important in regulating ATPase activity and the flow of protons through the CF(0) complex.</text>
</comment>
<comment type="subunit">
    <text evidence="1">F-type ATPases have 2 components, CF(1) - the catalytic core - and CF(0) - the membrane proton channel. CF(1) has five subunits: alpha(3), beta(3), gamma(1), delta(1), epsilon(1). CF(0) has three main subunits: a, b and c.</text>
</comment>
<comment type="subcellular location">
    <subcellularLocation>
        <location evidence="1">Cell membrane</location>
        <topology evidence="1">Peripheral membrane protein</topology>
    </subcellularLocation>
</comment>
<comment type="similarity">
    <text evidence="1">Belongs to the ATPase gamma chain family.</text>
</comment>
<gene>
    <name evidence="1" type="primary">atpG</name>
    <name type="ordered locus">CLL_A0497</name>
</gene>
<proteinExistence type="inferred from homology"/>
<reference key="1">
    <citation type="submission" date="2008-04" db="EMBL/GenBank/DDBJ databases">
        <title>Complete sequence of Clostridium botulinum strain Eklund.</title>
        <authorList>
            <person name="Brinkac L.M."/>
            <person name="Brown J.L."/>
            <person name="Bruce D."/>
            <person name="Detter C."/>
            <person name="Munk C."/>
            <person name="Smith L.A."/>
            <person name="Smith T.J."/>
            <person name="Sutton G."/>
            <person name="Brettin T.S."/>
        </authorList>
    </citation>
    <scope>NUCLEOTIDE SEQUENCE [LARGE SCALE GENOMIC DNA]</scope>
    <source>
        <strain>Eklund 17B / Type B</strain>
    </source>
</reference>
<name>ATPG_CLOBB</name>
<keyword id="KW-0066">ATP synthesis</keyword>
<keyword id="KW-1003">Cell membrane</keyword>
<keyword id="KW-0139">CF(1)</keyword>
<keyword id="KW-0375">Hydrogen ion transport</keyword>
<keyword id="KW-0406">Ion transport</keyword>
<keyword id="KW-0472">Membrane</keyword>
<keyword id="KW-0813">Transport</keyword>
<accession>B2TJZ9</accession>
<protein>
    <recommendedName>
        <fullName evidence="1">ATP synthase gamma chain</fullName>
    </recommendedName>
    <alternativeName>
        <fullName evidence="1">ATP synthase F1 sector gamma subunit</fullName>
    </alternativeName>
    <alternativeName>
        <fullName evidence="1">F-ATPase gamma subunit</fullName>
    </alternativeName>
</protein>
<organism>
    <name type="scientific">Clostridium botulinum (strain Eklund 17B / Type B)</name>
    <dbReference type="NCBI Taxonomy" id="935198"/>
    <lineage>
        <taxon>Bacteria</taxon>
        <taxon>Bacillati</taxon>
        <taxon>Bacillota</taxon>
        <taxon>Clostridia</taxon>
        <taxon>Eubacteriales</taxon>
        <taxon>Clostridiaceae</taxon>
        <taxon>Clostridium</taxon>
    </lineage>
</organism>
<feature type="chain" id="PRO_1000134127" description="ATP synthase gamma chain">
    <location>
        <begin position="1"/>
        <end position="283"/>
    </location>
</feature>
<evidence type="ECO:0000255" key="1">
    <source>
        <dbReference type="HAMAP-Rule" id="MF_00815"/>
    </source>
</evidence>
<sequence length="283" mass="31786">MGSAGLIEIKRRIKSVESTRKITNAMGLVATSKLRKTRKELFINKKFFEETEKIIEKLASTISQDDDSIYFKSNKSKYKLYILVSSDTGLCGSYNNTVVSYLDSLVRDEKENIKVITVGSKGLSYVKRIGLDTIADYVDIPDIPTVKEVKIVFESALKMYKDGEVSEINVAYLDFVSPVKQEPKAEKLLPIEKITSVPEEFITEPNSEEVLNNALNIHLKGKFRNILLSAKCSEQSSRMTAMNGATQNANDILDNLNLKYNRIRQQIITQEISEIVGGAEAQK</sequence>